<protein>
    <recommendedName>
        <fullName>Ankyrin repeat and SOCS box protein 5</fullName>
        <shortName>ASB-5</shortName>
    </recommendedName>
</protein>
<evidence type="ECO:0000250" key="1"/>
<evidence type="ECO:0000255" key="2">
    <source>
        <dbReference type="PROSITE-ProRule" id="PRU00194"/>
    </source>
</evidence>
<evidence type="ECO:0000303" key="3">
    <source>
    </source>
</evidence>
<evidence type="ECO:0000305" key="4"/>
<proteinExistence type="evidence at protein level"/>
<reference key="1">
    <citation type="submission" date="2001-09" db="EMBL/GenBank/DDBJ databases">
        <authorList>
            <person name="Kile B.T."/>
            <person name="Hilton D.J."/>
            <person name="Nicola N.A."/>
        </authorList>
    </citation>
    <scope>NUCLEOTIDE SEQUENCE [MRNA] (ISOFORM 1)</scope>
</reference>
<reference key="2">
    <citation type="journal article" date="2004" name="Nat. Genet.">
        <title>Complete sequencing and characterization of 21,243 full-length human cDNAs.</title>
        <authorList>
            <person name="Ota T."/>
            <person name="Suzuki Y."/>
            <person name="Nishikawa T."/>
            <person name="Otsuki T."/>
            <person name="Sugiyama T."/>
            <person name="Irie R."/>
            <person name="Wakamatsu A."/>
            <person name="Hayashi K."/>
            <person name="Sato H."/>
            <person name="Nagai K."/>
            <person name="Kimura K."/>
            <person name="Makita H."/>
            <person name="Sekine M."/>
            <person name="Obayashi M."/>
            <person name="Nishi T."/>
            <person name="Shibahara T."/>
            <person name="Tanaka T."/>
            <person name="Ishii S."/>
            <person name="Yamamoto J."/>
            <person name="Saito K."/>
            <person name="Kawai Y."/>
            <person name="Isono Y."/>
            <person name="Nakamura Y."/>
            <person name="Nagahari K."/>
            <person name="Murakami K."/>
            <person name="Yasuda T."/>
            <person name="Iwayanagi T."/>
            <person name="Wagatsuma M."/>
            <person name="Shiratori A."/>
            <person name="Sudo H."/>
            <person name="Hosoiri T."/>
            <person name="Kaku Y."/>
            <person name="Kodaira H."/>
            <person name="Kondo H."/>
            <person name="Sugawara M."/>
            <person name="Takahashi M."/>
            <person name="Kanda K."/>
            <person name="Yokoi T."/>
            <person name="Furuya T."/>
            <person name="Kikkawa E."/>
            <person name="Omura Y."/>
            <person name="Abe K."/>
            <person name="Kamihara K."/>
            <person name="Katsuta N."/>
            <person name="Sato K."/>
            <person name="Tanikawa M."/>
            <person name="Yamazaki M."/>
            <person name="Ninomiya K."/>
            <person name="Ishibashi T."/>
            <person name="Yamashita H."/>
            <person name="Murakawa K."/>
            <person name="Fujimori K."/>
            <person name="Tanai H."/>
            <person name="Kimata M."/>
            <person name="Watanabe M."/>
            <person name="Hiraoka S."/>
            <person name="Chiba Y."/>
            <person name="Ishida S."/>
            <person name="Ono Y."/>
            <person name="Takiguchi S."/>
            <person name="Watanabe S."/>
            <person name="Yosida M."/>
            <person name="Hotuta T."/>
            <person name="Kusano J."/>
            <person name="Kanehori K."/>
            <person name="Takahashi-Fujii A."/>
            <person name="Hara H."/>
            <person name="Tanase T.-O."/>
            <person name="Nomura Y."/>
            <person name="Togiya S."/>
            <person name="Komai F."/>
            <person name="Hara R."/>
            <person name="Takeuchi K."/>
            <person name="Arita M."/>
            <person name="Imose N."/>
            <person name="Musashino K."/>
            <person name="Yuuki H."/>
            <person name="Oshima A."/>
            <person name="Sasaki N."/>
            <person name="Aotsuka S."/>
            <person name="Yoshikawa Y."/>
            <person name="Matsunawa H."/>
            <person name="Ichihara T."/>
            <person name="Shiohata N."/>
            <person name="Sano S."/>
            <person name="Moriya S."/>
            <person name="Momiyama H."/>
            <person name="Satoh N."/>
            <person name="Takami S."/>
            <person name="Terashima Y."/>
            <person name="Suzuki O."/>
            <person name="Nakagawa S."/>
            <person name="Senoh A."/>
            <person name="Mizoguchi H."/>
            <person name="Goto Y."/>
            <person name="Shimizu F."/>
            <person name="Wakebe H."/>
            <person name="Hishigaki H."/>
            <person name="Watanabe T."/>
            <person name="Sugiyama A."/>
            <person name="Takemoto M."/>
            <person name="Kawakami B."/>
            <person name="Yamazaki M."/>
            <person name="Watanabe K."/>
            <person name="Kumagai A."/>
            <person name="Itakura S."/>
            <person name="Fukuzumi Y."/>
            <person name="Fujimori Y."/>
            <person name="Komiyama M."/>
            <person name="Tashiro H."/>
            <person name="Tanigami A."/>
            <person name="Fujiwara T."/>
            <person name="Ono T."/>
            <person name="Yamada K."/>
            <person name="Fujii Y."/>
            <person name="Ozaki K."/>
            <person name="Hirao M."/>
            <person name="Ohmori Y."/>
            <person name="Kawabata A."/>
            <person name="Hikiji T."/>
            <person name="Kobatake N."/>
            <person name="Inagaki H."/>
            <person name="Ikema Y."/>
            <person name="Okamoto S."/>
            <person name="Okitani R."/>
            <person name="Kawakami T."/>
            <person name="Noguchi S."/>
            <person name="Itoh T."/>
            <person name="Shigeta K."/>
            <person name="Senba T."/>
            <person name="Matsumura K."/>
            <person name="Nakajima Y."/>
            <person name="Mizuno T."/>
            <person name="Morinaga M."/>
            <person name="Sasaki M."/>
            <person name="Togashi T."/>
            <person name="Oyama M."/>
            <person name="Hata H."/>
            <person name="Watanabe M."/>
            <person name="Komatsu T."/>
            <person name="Mizushima-Sugano J."/>
            <person name="Satoh T."/>
            <person name="Shirai Y."/>
            <person name="Takahashi Y."/>
            <person name="Nakagawa K."/>
            <person name="Okumura K."/>
            <person name="Nagase T."/>
            <person name="Nomura N."/>
            <person name="Kikuchi H."/>
            <person name="Masuho Y."/>
            <person name="Yamashita R."/>
            <person name="Nakai K."/>
            <person name="Yada T."/>
            <person name="Nakamura Y."/>
            <person name="Ohara O."/>
            <person name="Isogai T."/>
            <person name="Sugano S."/>
        </authorList>
    </citation>
    <scope>NUCLEOTIDE SEQUENCE [LARGE SCALE MRNA] (ISOFORM 2)</scope>
    <source>
        <tissue>Testis</tissue>
    </source>
</reference>
<reference key="3">
    <citation type="journal article" date="2005" name="Nature">
        <title>Generation and annotation of the DNA sequences of human chromosomes 2 and 4.</title>
        <authorList>
            <person name="Hillier L.W."/>
            <person name="Graves T.A."/>
            <person name="Fulton R.S."/>
            <person name="Fulton L.A."/>
            <person name="Pepin K.H."/>
            <person name="Minx P."/>
            <person name="Wagner-McPherson C."/>
            <person name="Layman D."/>
            <person name="Wylie K."/>
            <person name="Sekhon M."/>
            <person name="Becker M.C."/>
            <person name="Fewell G.A."/>
            <person name="Delehaunty K.D."/>
            <person name="Miner T.L."/>
            <person name="Nash W.E."/>
            <person name="Kremitzki C."/>
            <person name="Oddy L."/>
            <person name="Du H."/>
            <person name="Sun H."/>
            <person name="Bradshaw-Cordum H."/>
            <person name="Ali J."/>
            <person name="Carter J."/>
            <person name="Cordes M."/>
            <person name="Harris A."/>
            <person name="Isak A."/>
            <person name="van Brunt A."/>
            <person name="Nguyen C."/>
            <person name="Du F."/>
            <person name="Courtney L."/>
            <person name="Kalicki J."/>
            <person name="Ozersky P."/>
            <person name="Abbott S."/>
            <person name="Armstrong J."/>
            <person name="Belter E.A."/>
            <person name="Caruso L."/>
            <person name="Cedroni M."/>
            <person name="Cotton M."/>
            <person name="Davidson T."/>
            <person name="Desai A."/>
            <person name="Elliott G."/>
            <person name="Erb T."/>
            <person name="Fronick C."/>
            <person name="Gaige T."/>
            <person name="Haakenson W."/>
            <person name="Haglund K."/>
            <person name="Holmes A."/>
            <person name="Harkins R."/>
            <person name="Kim K."/>
            <person name="Kruchowski S.S."/>
            <person name="Strong C.M."/>
            <person name="Grewal N."/>
            <person name="Goyea E."/>
            <person name="Hou S."/>
            <person name="Levy A."/>
            <person name="Martinka S."/>
            <person name="Mead K."/>
            <person name="McLellan M.D."/>
            <person name="Meyer R."/>
            <person name="Randall-Maher J."/>
            <person name="Tomlinson C."/>
            <person name="Dauphin-Kohlberg S."/>
            <person name="Kozlowicz-Reilly A."/>
            <person name="Shah N."/>
            <person name="Swearengen-Shahid S."/>
            <person name="Snider J."/>
            <person name="Strong J.T."/>
            <person name="Thompson J."/>
            <person name="Yoakum M."/>
            <person name="Leonard S."/>
            <person name="Pearman C."/>
            <person name="Trani L."/>
            <person name="Radionenko M."/>
            <person name="Waligorski J.E."/>
            <person name="Wang C."/>
            <person name="Rock S.M."/>
            <person name="Tin-Wollam A.-M."/>
            <person name="Maupin R."/>
            <person name="Latreille P."/>
            <person name="Wendl M.C."/>
            <person name="Yang S.-P."/>
            <person name="Pohl C."/>
            <person name="Wallis J.W."/>
            <person name="Spieth J."/>
            <person name="Bieri T.A."/>
            <person name="Berkowicz N."/>
            <person name="Nelson J.O."/>
            <person name="Osborne J."/>
            <person name="Ding L."/>
            <person name="Meyer R."/>
            <person name="Sabo A."/>
            <person name="Shotland Y."/>
            <person name="Sinha P."/>
            <person name="Wohldmann P.E."/>
            <person name="Cook L.L."/>
            <person name="Hickenbotham M.T."/>
            <person name="Eldred J."/>
            <person name="Williams D."/>
            <person name="Jones T.A."/>
            <person name="She X."/>
            <person name="Ciccarelli F.D."/>
            <person name="Izaurralde E."/>
            <person name="Taylor J."/>
            <person name="Schmutz J."/>
            <person name="Myers R.M."/>
            <person name="Cox D.R."/>
            <person name="Huang X."/>
            <person name="McPherson J.D."/>
            <person name="Mardis E.R."/>
            <person name="Clifton S.W."/>
            <person name="Warren W.C."/>
            <person name="Chinwalla A.T."/>
            <person name="Eddy S.R."/>
            <person name="Marra M.A."/>
            <person name="Ovcharenko I."/>
            <person name="Furey T.S."/>
            <person name="Miller W."/>
            <person name="Eichler E.E."/>
            <person name="Bork P."/>
            <person name="Suyama M."/>
            <person name="Torrents D."/>
            <person name="Waterston R.H."/>
            <person name="Wilson R.K."/>
        </authorList>
    </citation>
    <scope>NUCLEOTIDE SEQUENCE [LARGE SCALE GENOMIC DNA]</scope>
</reference>
<reference key="4">
    <citation type="journal article" date="2004" name="Genome Res.">
        <title>The status, quality, and expansion of the NIH full-length cDNA project: the Mammalian Gene Collection (MGC).</title>
        <authorList>
            <consortium name="The MGC Project Team"/>
        </authorList>
    </citation>
    <scope>NUCLEOTIDE SEQUENCE [LARGE SCALE MRNA] (ISOFORM 1)</scope>
    <source>
        <tissue>Skeletal muscle</tissue>
    </source>
</reference>
<sequence length="329" mass="36341">MSVLEENRPFAQQLSNVYFTILSLFCFKLFVKISLAILSHFYIVKGNRKEAARIAAEFYGVTQGQGSWADRSPLHEAASQGRLLALRTLLSQGYNVNAVTLDHVTPLHEACLGDHVACARTLLEAGANVNAITIDGVTPLFNACSQGSPSCAELLLEYGAKAQLESCLPSPTHEAASKGHHECLDILISWGIDVDQEIPHLGTPLYVACMSQQFHCIWKLLYAGADVQKGKYWDTPLHAAAQQSSTEIVNLLLEFGADINAKNTELLRPIDVATSSSMVERILLQHEATPSSLYQLCRLCIRSYIGKPRLHLIPQLQLPTLLKNFLQYR</sequence>
<feature type="chain" id="PRO_0000066930" description="Ankyrin repeat and SOCS box protein 5">
    <location>
        <begin position="1"/>
        <end position="329"/>
    </location>
</feature>
<feature type="repeat" description="ANK 1">
    <location>
        <begin position="69"/>
        <end position="98"/>
    </location>
</feature>
<feature type="repeat" description="ANK 2">
    <location>
        <begin position="102"/>
        <end position="131"/>
    </location>
</feature>
<feature type="repeat" description="ANK 3">
    <location>
        <begin position="135"/>
        <end position="164"/>
    </location>
</feature>
<feature type="repeat" description="ANK 4">
    <location>
        <begin position="167"/>
        <end position="196"/>
    </location>
</feature>
<feature type="repeat" description="ANK 5">
    <location>
        <begin position="200"/>
        <end position="229"/>
    </location>
</feature>
<feature type="repeat" description="ANK 6">
    <location>
        <begin position="232"/>
        <end position="261"/>
    </location>
</feature>
<feature type="domain" description="SOCS box" evidence="2">
    <location>
        <begin position="278"/>
        <end position="329"/>
    </location>
</feature>
<feature type="splice variant" id="VSP_054425" description="In isoform 2." evidence="3">
    <original>MSVLEENRPFAQQLSNVYFTILSLFCFKLFVKISLAILSHFYIVKGNRKEAARIAAEFYGVTQGQ</original>
    <variation>MPLCNGGNLAVT</variation>
    <location>
        <begin position="1"/>
        <end position="65"/>
    </location>
</feature>
<comment type="function">
    <text evidence="1">May be a substrate-recognition component of a SCF-like ECS (Elongin-Cullin-SOCS-box protein) E3 ubiquitin-protein ligase complex which mediates the ubiquitination and subsequent proteasomal degradation of target proteins. May play a role in the initiation of arteriogenesis (By similarity).</text>
</comment>
<comment type="pathway">
    <text>Protein modification; protein ubiquitination.</text>
</comment>
<comment type="alternative products">
    <event type="alternative splicing"/>
    <isoform>
        <id>Q8WWX0-1</id>
        <name>1</name>
        <sequence type="displayed"/>
    </isoform>
    <isoform>
        <id>Q8WWX0-2</id>
        <name>2</name>
        <sequence type="described" ref="VSP_054425"/>
    </isoform>
</comment>
<comment type="domain">
    <text evidence="1">The SOCS box domain mediates the interaction with the Elongin BC complex, an adapter module in different E3 ubiquitin-protein ligase complexes.</text>
</comment>
<comment type="similarity">
    <text evidence="4">Belongs to the ankyrin SOCS box (ASB) family.</text>
</comment>
<gene>
    <name type="primary">ASB5</name>
</gene>
<dbReference type="EMBL" id="AY057053">
    <property type="protein sequence ID" value="AAL18248.1"/>
    <property type="molecule type" value="mRNA"/>
</dbReference>
<dbReference type="EMBL" id="AK098693">
    <property type="protein sequence ID" value="BAC05382.1"/>
    <property type="molecule type" value="mRNA"/>
</dbReference>
<dbReference type="EMBL" id="AC019163">
    <property type="status" value="NOT_ANNOTATED_CDS"/>
    <property type="molecule type" value="Genomic_DNA"/>
</dbReference>
<dbReference type="EMBL" id="AC093605">
    <property type="status" value="NOT_ANNOTATED_CDS"/>
    <property type="molecule type" value="Genomic_DNA"/>
</dbReference>
<dbReference type="EMBL" id="BC065710">
    <property type="protein sequence ID" value="AAH65710.1"/>
    <property type="molecule type" value="mRNA"/>
</dbReference>
<dbReference type="CCDS" id="CCDS3827.1">
    <molecule id="Q8WWX0-1"/>
</dbReference>
<dbReference type="RefSeq" id="NP_543150.1">
    <molecule id="Q8WWX0-1"/>
    <property type="nucleotide sequence ID" value="NM_080874.4"/>
</dbReference>
<dbReference type="RefSeq" id="XP_005262816.1">
    <molecule id="Q8WWX0-1"/>
    <property type="nucleotide sequence ID" value="XM_005262759.2"/>
</dbReference>
<dbReference type="RefSeq" id="XP_011529919.1">
    <molecule id="Q8WWX0-2"/>
    <property type="nucleotide sequence ID" value="XM_011531617.4"/>
</dbReference>
<dbReference type="RefSeq" id="XP_054204944.1">
    <molecule id="Q8WWX0-1"/>
    <property type="nucleotide sequence ID" value="XM_054348969.1"/>
</dbReference>
<dbReference type="RefSeq" id="XP_054204945.1">
    <molecule id="Q8WWX0-2"/>
    <property type="nucleotide sequence ID" value="XM_054348970.1"/>
</dbReference>
<dbReference type="SMR" id="Q8WWX0"/>
<dbReference type="BioGRID" id="126611">
    <property type="interactions" value="23"/>
</dbReference>
<dbReference type="FunCoup" id="Q8WWX0">
    <property type="interactions" value="454"/>
</dbReference>
<dbReference type="STRING" id="9606.ENSP00000296525"/>
<dbReference type="BioMuta" id="ASB5"/>
<dbReference type="DMDM" id="20531989"/>
<dbReference type="MassIVE" id="Q8WWX0"/>
<dbReference type="PaxDb" id="9606-ENSP00000296525"/>
<dbReference type="PeptideAtlas" id="Q8WWX0"/>
<dbReference type="ProteomicsDB" id="72279"/>
<dbReference type="ProteomicsDB" id="74949">
    <molecule id="Q8WWX0-1"/>
</dbReference>
<dbReference type="Antibodypedia" id="28653">
    <property type="antibodies" value="90 antibodies from 21 providers"/>
</dbReference>
<dbReference type="DNASU" id="140458"/>
<dbReference type="Ensembl" id="ENST00000296525.7">
    <molecule id="Q8WWX0-1"/>
    <property type="protein sequence ID" value="ENSP00000296525.3"/>
    <property type="gene ID" value="ENSG00000164122.9"/>
</dbReference>
<dbReference type="Ensembl" id="ENST00000512254.1">
    <molecule id="Q8WWX0-2"/>
    <property type="protein sequence ID" value="ENSP00000422877.1"/>
    <property type="gene ID" value="ENSG00000164122.9"/>
</dbReference>
<dbReference type="GeneID" id="140458"/>
<dbReference type="KEGG" id="hsa:140458"/>
<dbReference type="MANE-Select" id="ENST00000296525.7">
    <property type="protein sequence ID" value="ENSP00000296525.3"/>
    <property type="RefSeq nucleotide sequence ID" value="NM_080874.4"/>
    <property type="RefSeq protein sequence ID" value="NP_543150.1"/>
</dbReference>
<dbReference type="UCSC" id="uc003iup.3">
    <molecule id="Q8WWX0-1"/>
    <property type="organism name" value="human"/>
</dbReference>
<dbReference type="AGR" id="HGNC:17180"/>
<dbReference type="CTD" id="140458"/>
<dbReference type="DisGeNET" id="140458"/>
<dbReference type="GeneCards" id="ASB5"/>
<dbReference type="HGNC" id="HGNC:17180">
    <property type="gene designation" value="ASB5"/>
</dbReference>
<dbReference type="HPA" id="ENSG00000164122">
    <property type="expression patterns" value="Group enriched (skeletal muscle, tongue)"/>
</dbReference>
<dbReference type="MIM" id="615050">
    <property type="type" value="gene"/>
</dbReference>
<dbReference type="neXtProt" id="NX_Q8WWX0"/>
<dbReference type="OpenTargets" id="ENSG00000164122"/>
<dbReference type="PharmGKB" id="PA25033"/>
<dbReference type="VEuPathDB" id="HostDB:ENSG00000164122"/>
<dbReference type="eggNOG" id="KOG0504">
    <property type="taxonomic scope" value="Eukaryota"/>
</dbReference>
<dbReference type="GeneTree" id="ENSGT00940000159851"/>
<dbReference type="HOGENOM" id="CLU_000134_4_1_1"/>
<dbReference type="InParanoid" id="Q8WWX0"/>
<dbReference type="OMA" id="LASREEC"/>
<dbReference type="OrthoDB" id="3246549at2759"/>
<dbReference type="PAN-GO" id="Q8WWX0">
    <property type="GO annotations" value="2 GO annotations based on evolutionary models"/>
</dbReference>
<dbReference type="PhylomeDB" id="Q8WWX0"/>
<dbReference type="TreeFam" id="TF331945"/>
<dbReference type="PathwayCommons" id="Q8WWX0"/>
<dbReference type="Reactome" id="R-HSA-8951664">
    <property type="pathway name" value="Neddylation"/>
</dbReference>
<dbReference type="Reactome" id="R-HSA-983168">
    <property type="pathway name" value="Antigen processing: Ubiquitination &amp; Proteasome degradation"/>
</dbReference>
<dbReference type="UniPathway" id="UPA00143"/>
<dbReference type="BioGRID-ORCS" id="140458">
    <property type="hits" value="8 hits in 1184 CRISPR screens"/>
</dbReference>
<dbReference type="ChiTaRS" id="ASB5">
    <property type="organism name" value="human"/>
</dbReference>
<dbReference type="GenomeRNAi" id="140458"/>
<dbReference type="Pharos" id="Q8WWX0">
    <property type="development level" value="Tdark"/>
</dbReference>
<dbReference type="PRO" id="PR:Q8WWX0"/>
<dbReference type="Proteomes" id="UP000005640">
    <property type="component" value="Chromosome 4"/>
</dbReference>
<dbReference type="RNAct" id="Q8WWX0">
    <property type="molecule type" value="protein"/>
</dbReference>
<dbReference type="Bgee" id="ENSG00000164122">
    <property type="expression patterns" value="Expressed in skeletal muscle tissue of rectus abdominis and 121 other cell types or tissues"/>
</dbReference>
<dbReference type="ExpressionAtlas" id="Q8WWX0">
    <property type="expression patterns" value="baseline and differential"/>
</dbReference>
<dbReference type="GO" id="GO:0005829">
    <property type="term" value="C:cytosol"/>
    <property type="evidence" value="ECO:0000304"/>
    <property type="project" value="Reactome"/>
</dbReference>
<dbReference type="GO" id="GO:0035556">
    <property type="term" value="P:intracellular signal transduction"/>
    <property type="evidence" value="ECO:0007669"/>
    <property type="project" value="InterPro"/>
</dbReference>
<dbReference type="GO" id="GO:0045732">
    <property type="term" value="P:positive regulation of protein catabolic process"/>
    <property type="evidence" value="ECO:0000318"/>
    <property type="project" value="GO_Central"/>
</dbReference>
<dbReference type="GO" id="GO:0016567">
    <property type="term" value="P:protein ubiquitination"/>
    <property type="evidence" value="ECO:0000318"/>
    <property type="project" value="GO_Central"/>
</dbReference>
<dbReference type="CDD" id="cd03724">
    <property type="entry name" value="SOCS_ASB5"/>
    <property type="match status" value="1"/>
</dbReference>
<dbReference type="FunFam" id="1.10.750.20:FF:000001">
    <property type="entry name" value="Ankyrin repeat and SOCS box containing 1"/>
    <property type="match status" value="1"/>
</dbReference>
<dbReference type="FunFam" id="1.25.40.20:FF:000016">
    <property type="entry name" value="Ankyrin repeat and SOCS box containing 5"/>
    <property type="match status" value="1"/>
</dbReference>
<dbReference type="Gene3D" id="1.25.40.20">
    <property type="entry name" value="Ankyrin repeat-containing domain"/>
    <property type="match status" value="1"/>
</dbReference>
<dbReference type="Gene3D" id="1.10.750.20">
    <property type="entry name" value="SOCS box"/>
    <property type="match status" value="1"/>
</dbReference>
<dbReference type="InterPro" id="IPR051573">
    <property type="entry name" value="Ankyrin-SOCS_box_domain"/>
</dbReference>
<dbReference type="InterPro" id="IPR002110">
    <property type="entry name" value="Ankyrin_rpt"/>
</dbReference>
<dbReference type="InterPro" id="IPR036770">
    <property type="entry name" value="Ankyrin_rpt-contain_sf"/>
</dbReference>
<dbReference type="InterPro" id="IPR037328">
    <property type="entry name" value="ASB5_SOCS"/>
</dbReference>
<dbReference type="InterPro" id="IPR001496">
    <property type="entry name" value="SOCS_box"/>
</dbReference>
<dbReference type="InterPro" id="IPR036036">
    <property type="entry name" value="SOCS_box-like_dom_sf"/>
</dbReference>
<dbReference type="PANTHER" id="PTHR24136:SF18">
    <property type="entry name" value="ANKYRIN REPEAT AND SOCS BOX PROTEIN 5"/>
    <property type="match status" value="1"/>
</dbReference>
<dbReference type="PANTHER" id="PTHR24136">
    <property type="entry name" value="SOWAH (DROSOPHILA) HOMOLOG"/>
    <property type="match status" value="1"/>
</dbReference>
<dbReference type="Pfam" id="PF12796">
    <property type="entry name" value="Ank_2"/>
    <property type="match status" value="2"/>
</dbReference>
<dbReference type="Pfam" id="PF07525">
    <property type="entry name" value="SOCS_box"/>
    <property type="match status" value="1"/>
</dbReference>
<dbReference type="PRINTS" id="PR01415">
    <property type="entry name" value="ANKYRIN"/>
</dbReference>
<dbReference type="SMART" id="SM00248">
    <property type="entry name" value="ANK"/>
    <property type="match status" value="6"/>
</dbReference>
<dbReference type="SMART" id="SM00969">
    <property type="entry name" value="SOCS_box"/>
    <property type="match status" value="1"/>
</dbReference>
<dbReference type="SUPFAM" id="SSF48403">
    <property type="entry name" value="Ankyrin repeat"/>
    <property type="match status" value="1"/>
</dbReference>
<dbReference type="SUPFAM" id="SSF158235">
    <property type="entry name" value="SOCS box-like"/>
    <property type="match status" value="1"/>
</dbReference>
<dbReference type="PROSITE" id="PS50297">
    <property type="entry name" value="ANK_REP_REGION"/>
    <property type="match status" value="1"/>
</dbReference>
<dbReference type="PROSITE" id="PS50088">
    <property type="entry name" value="ANK_REPEAT"/>
    <property type="match status" value="4"/>
</dbReference>
<dbReference type="PROSITE" id="PS50225">
    <property type="entry name" value="SOCS"/>
    <property type="match status" value="1"/>
</dbReference>
<name>ASB5_HUMAN</name>
<keyword id="KW-0025">Alternative splicing</keyword>
<keyword id="KW-0040">ANK repeat</keyword>
<keyword id="KW-1267">Proteomics identification</keyword>
<keyword id="KW-1185">Reference proteome</keyword>
<keyword id="KW-0677">Repeat</keyword>
<keyword id="KW-0833">Ubl conjugation pathway</keyword>
<accession>Q8WWX0</accession>
<accession>Q8N7B5</accession>
<organism>
    <name type="scientific">Homo sapiens</name>
    <name type="common">Human</name>
    <dbReference type="NCBI Taxonomy" id="9606"/>
    <lineage>
        <taxon>Eukaryota</taxon>
        <taxon>Metazoa</taxon>
        <taxon>Chordata</taxon>
        <taxon>Craniata</taxon>
        <taxon>Vertebrata</taxon>
        <taxon>Euteleostomi</taxon>
        <taxon>Mammalia</taxon>
        <taxon>Eutheria</taxon>
        <taxon>Euarchontoglires</taxon>
        <taxon>Primates</taxon>
        <taxon>Haplorrhini</taxon>
        <taxon>Catarrhini</taxon>
        <taxon>Hominidae</taxon>
        <taxon>Homo</taxon>
    </lineage>
</organism>